<dbReference type="EMBL" id="AB067491">
    <property type="protein sequence ID" value="BAB67797.1"/>
    <property type="status" value="ALT_INIT"/>
    <property type="molecule type" value="mRNA"/>
</dbReference>
<dbReference type="EMBL" id="Z94160">
    <property type="status" value="NOT_ANNOTATED_CDS"/>
    <property type="molecule type" value="Genomic_DNA"/>
</dbReference>
<dbReference type="CCDS" id="CCDS33642.1"/>
<dbReference type="RefSeq" id="NP_443138.2">
    <property type="nucleotide sequence ID" value="NM_052906.5"/>
</dbReference>
<dbReference type="SMR" id="Q5R3F8"/>
<dbReference type="BioGRID" id="125356">
    <property type="interactions" value="40"/>
</dbReference>
<dbReference type="FunCoup" id="Q5R3F8">
    <property type="interactions" value="190"/>
</dbReference>
<dbReference type="IntAct" id="Q5R3F8">
    <property type="interactions" value="14"/>
</dbReference>
<dbReference type="MINT" id="Q5R3F8"/>
<dbReference type="STRING" id="9606.ENSP00000385277"/>
<dbReference type="GlyCosmos" id="Q5R3F8">
    <property type="glycosylation" value="6 sites, No reported glycans"/>
</dbReference>
<dbReference type="GlyGen" id="Q5R3F8">
    <property type="glycosylation" value="7 sites, 4 N-linked glycans (2 sites)"/>
</dbReference>
<dbReference type="iPTMnet" id="Q5R3F8"/>
<dbReference type="PhosphoSitePlus" id="Q5R3F8"/>
<dbReference type="BioMuta" id="ELFN2"/>
<dbReference type="DMDM" id="74755895"/>
<dbReference type="jPOST" id="Q5R3F8"/>
<dbReference type="MassIVE" id="Q5R3F8"/>
<dbReference type="PaxDb" id="9606-ENSP00000385277"/>
<dbReference type="PeptideAtlas" id="Q5R3F8"/>
<dbReference type="ProteomicsDB" id="63725"/>
<dbReference type="Antibodypedia" id="274">
    <property type="antibodies" value="61 antibodies from 15 providers"/>
</dbReference>
<dbReference type="DNASU" id="114794"/>
<dbReference type="Ensembl" id="ENST00000402918.7">
    <property type="protein sequence ID" value="ENSP00000385277.1"/>
    <property type="gene ID" value="ENSG00000166897.16"/>
</dbReference>
<dbReference type="GeneID" id="114794"/>
<dbReference type="KEGG" id="hsa:114794"/>
<dbReference type="MANE-Select" id="ENST00000402918.7">
    <property type="protein sequence ID" value="ENSP00000385277.1"/>
    <property type="RefSeq nucleotide sequence ID" value="NM_052906.5"/>
    <property type="RefSeq protein sequence ID" value="NP_443138.2"/>
</dbReference>
<dbReference type="UCSC" id="uc003asq.4">
    <property type="organism name" value="human"/>
</dbReference>
<dbReference type="AGR" id="HGNC:29396"/>
<dbReference type="CTD" id="114794"/>
<dbReference type="DisGeNET" id="114794"/>
<dbReference type="GeneCards" id="ELFN2"/>
<dbReference type="HGNC" id="HGNC:29396">
    <property type="gene designation" value="ELFN2"/>
</dbReference>
<dbReference type="HPA" id="ENSG00000166897">
    <property type="expression patterns" value="Group enriched (brain, retina)"/>
</dbReference>
<dbReference type="MIM" id="620223">
    <property type="type" value="gene"/>
</dbReference>
<dbReference type="neXtProt" id="NX_Q5R3F8"/>
<dbReference type="OpenTargets" id="ENSG00000166897"/>
<dbReference type="PharmGKB" id="PA162385040"/>
<dbReference type="VEuPathDB" id="HostDB:ENSG00000166897"/>
<dbReference type="eggNOG" id="ENOG502QVFI">
    <property type="taxonomic scope" value="Eukaryota"/>
</dbReference>
<dbReference type="GeneTree" id="ENSGT00940000159737"/>
<dbReference type="HOGENOM" id="CLU_018770_0_0_1"/>
<dbReference type="InParanoid" id="Q5R3F8"/>
<dbReference type="OMA" id="TIPHPYS"/>
<dbReference type="OrthoDB" id="676979at2759"/>
<dbReference type="PAN-GO" id="Q5R3F8">
    <property type="GO annotations" value="2 GO annotations based on evolutionary models"/>
</dbReference>
<dbReference type="PhylomeDB" id="Q5R3F8"/>
<dbReference type="TreeFam" id="TF332887"/>
<dbReference type="PathwayCommons" id="Q5R3F8"/>
<dbReference type="SignaLink" id="Q5R3F8"/>
<dbReference type="BioGRID-ORCS" id="114794">
    <property type="hits" value="17 hits in 1147 CRISPR screens"/>
</dbReference>
<dbReference type="CD-CODE" id="FB4E32DD">
    <property type="entry name" value="Presynaptic clusters and postsynaptic densities"/>
</dbReference>
<dbReference type="ChiTaRS" id="ELFN2">
    <property type="organism name" value="human"/>
</dbReference>
<dbReference type="GenomeRNAi" id="114794"/>
<dbReference type="Pharos" id="Q5R3F8">
    <property type="development level" value="Tdark"/>
</dbReference>
<dbReference type="PRO" id="PR:Q5R3F8"/>
<dbReference type="Proteomes" id="UP000005640">
    <property type="component" value="Chromosome 22"/>
</dbReference>
<dbReference type="RNAct" id="Q5R3F8">
    <property type="molecule type" value="protein"/>
</dbReference>
<dbReference type="Bgee" id="ENSG00000166897">
    <property type="expression patterns" value="Expressed in cortical plate and 114 other cell types or tissues"/>
</dbReference>
<dbReference type="GO" id="GO:0031012">
    <property type="term" value="C:extracellular matrix"/>
    <property type="evidence" value="ECO:0000318"/>
    <property type="project" value="GO_Central"/>
</dbReference>
<dbReference type="GO" id="GO:0005615">
    <property type="term" value="C:extracellular space"/>
    <property type="evidence" value="ECO:0007005"/>
    <property type="project" value="UniProtKB"/>
</dbReference>
<dbReference type="GO" id="GO:0098839">
    <property type="term" value="C:postsynaptic density membrane"/>
    <property type="evidence" value="ECO:0007669"/>
    <property type="project" value="Ensembl"/>
</dbReference>
<dbReference type="GO" id="GO:0004864">
    <property type="term" value="F:protein phosphatase inhibitor activity"/>
    <property type="evidence" value="ECO:0007669"/>
    <property type="project" value="UniProtKB-KW"/>
</dbReference>
<dbReference type="GO" id="GO:0007268">
    <property type="term" value="P:chemical synaptic transmission"/>
    <property type="evidence" value="ECO:0007669"/>
    <property type="project" value="Ensembl"/>
</dbReference>
<dbReference type="GO" id="GO:0045184">
    <property type="term" value="P:establishment of protein localization"/>
    <property type="evidence" value="ECO:0007669"/>
    <property type="project" value="Ensembl"/>
</dbReference>
<dbReference type="GO" id="GO:0010467">
    <property type="term" value="P:gene expression"/>
    <property type="evidence" value="ECO:0007669"/>
    <property type="project" value="Ensembl"/>
</dbReference>
<dbReference type="GO" id="GO:0099560">
    <property type="term" value="P:synaptic membrane adhesion"/>
    <property type="evidence" value="ECO:0007669"/>
    <property type="project" value="Ensembl"/>
</dbReference>
<dbReference type="FunFam" id="3.80.10.10:FF:000047">
    <property type="entry name" value="protein phosphatase 1 regulatory subunit 29"/>
    <property type="match status" value="1"/>
</dbReference>
<dbReference type="Gene3D" id="3.80.10.10">
    <property type="entry name" value="Ribonuclease Inhibitor"/>
    <property type="match status" value="1"/>
</dbReference>
<dbReference type="InterPro" id="IPR055106">
    <property type="entry name" value="ELFN_Fn3"/>
</dbReference>
<dbReference type="InterPro" id="IPR001611">
    <property type="entry name" value="Leu-rich_rpt"/>
</dbReference>
<dbReference type="InterPro" id="IPR003591">
    <property type="entry name" value="Leu-rich_rpt_typical-subtyp"/>
</dbReference>
<dbReference type="InterPro" id="IPR032675">
    <property type="entry name" value="LRR_dom_sf"/>
</dbReference>
<dbReference type="InterPro" id="IPR050541">
    <property type="entry name" value="LRR_TM_domain-containing"/>
</dbReference>
<dbReference type="PANTHER" id="PTHR24369">
    <property type="entry name" value="ANTIGEN BSP, PUTATIVE-RELATED"/>
    <property type="match status" value="1"/>
</dbReference>
<dbReference type="PANTHER" id="PTHR24369:SF204">
    <property type="entry name" value="PROTEIN PHOSPHATASE 1 REGULATORY SUBUNIT 29-RELATED"/>
    <property type="match status" value="1"/>
</dbReference>
<dbReference type="Pfam" id="PF22986">
    <property type="entry name" value="Fn3_ELFN"/>
    <property type="match status" value="1"/>
</dbReference>
<dbReference type="Pfam" id="PF13855">
    <property type="entry name" value="LRR_8"/>
    <property type="match status" value="1"/>
</dbReference>
<dbReference type="SMART" id="SM00369">
    <property type="entry name" value="LRR_TYP"/>
    <property type="match status" value="4"/>
</dbReference>
<dbReference type="SUPFAM" id="SSF52058">
    <property type="entry name" value="L domain-like"/>
    <property type="match status" value="1"/>
</dbReference>
<dbReference type="PROSITE" id="PS51450">
    <property type="entry name" value="LRR"/>
    <property type="match status" value="4"/>
</dbReference>
<organism>
    <name type="scientific">Homo sapiens</name>
    <name type="common">Human</name>
    <dbReference type="NCBI Taxonomy" id="9606"/>
    <lineage>
        <taxon>Eukaryota</taxon>
        <taxon>Metazoa</taxon>
        <taxon>Chordata</taxon>
        <taxon>Craniata</taxon>
        <taxon>Vertebrata</taxon>
        <taxon>Euteleostomi</taxon>
        <taxon>Mammalia</taxon>
        <taxon>Eutheria</taxon>
        <taxon>Euarchontoglires</taxon>
        <taxon>Primates</taxon>
        <taxon>Haplorrhini</taxon>
        <taxon>Catarrhini</taxon>
        <taxon>Hominidae</taxon>
        <taxon>Homo</taxon>
    </lineage>
</organism>
<comment type="function">
    <text evidence="4">Inhibits phosphatase activity of protein phosphatase 1 (PP1) complexes.</text>
</comment>
<comment type="subunit">
    <text evidence="4">Interacts with PPP1CA.</text>
</comment>
<comment type="subcellular location">
    <subcellularLocation>
        <location evidence="5">Membrane</location>
        <topology evidence="5">Single-pass membrane protein</topology>
    </subcellularLocation>
</comment>
<comment type="sequence caution" evidence="5">
    <conflict type="erroneous initiation">
        <sequence resource="EMBL-CDS" id="BAB67797"/>
    </conflict>
    <text>Extended N-terminus.</text>
</comment>
<protein>
    <recommendedName>
        <fullName>Protein phosphatase 1 regulatory subunit 29</fullName>
    </recommendedName>
    <alternativeName>
        <fullName>Extracellular leucine-rich repeat and fibronectin type III domain-containing protein 2</fullName>
    </alternativeName>
    <alternativeName>
        <fullName>Leucine-rich repeat and fibronectin type-III domain-containing protein 6</fullName>
    </alternativeName>
    <alternativeName>
        <fullName>Leucine-rich repeat-containing protein 62</fullName>
    </alternativeName>
</protein>
<evidence type="ECO:0000250" key="1">
    <source>
        <dbReference type="UniProtKB" id="Q68FM6"/>
    </source>
</evidence>
<evidence type="ECO:0000255" key="2"/>
<evidence type="ECO:0000256" key="3">
    <source>
        <dbReference type="SAM" id="MobiDB-lite"/>
    </source>
</evidence>
<evidence type="ECO:0000269" key="4">
    <source>
    </source>
</evidence>
<evidence type="ECO:0000305" key="5"/>
<evidence type="ECO:0007744" key="6">
    <source>
    </source>
</evidence>
<sequence length="820" mass="89687">MLRLGLCAAALLCVCRPGAVRADCWLIEGDKGYVWLAICSQNQPPYETIPQHINSTVHDLRLNENKLKAVLYSSLNRFGNLTDLNLTKNEISYIEDGAFLGQSSLQVLQLGYNKLSNLTEGMLRGMSRLQFLFVQHNLIEVVTPTAFSECPSLISIDLSSNRLSRLDGATFASLASLMVCELAGNPFNCECDLFGFLAWLVVFNNVTKNYDRLQCESPREFAGYPLLVPRPYHSLNAITVLQAKCRNGSLPARPVSHPTPYSTDAQREPDENSGFNPDEILSVEPPASSTTDASAGPAIKLHHVTFTSATLVVIIPHPYSKMYILVQYNNSYFSDVMTLKNKKEIVTLDKLRAHTEYTFCVTSLRNSRRFNHTCLTFTTRDPVPGDLAPSTSTTTHYIMTILGCLFGMVIVLGAVYYCLRKRRMQEEKQKSVNVKKTILEMRYGADVDAGSIVHAAQKLGEPPVLPVSRMASIPSMIGEKLPTAKGLEAGLDTPKVATKGNYIEVRTGAGGDGLARPEDDLPDLENGQGSAAEISTIAKEVDKVNQIINNCIDALKLDSASFLGGGSSSGDPELAFECQSLPAAAAASSATGPGALERPSFLSPPYKESSHHPLQRQLSADAAVTRKTCSVSSSGSIKSAKVFSLDVPDHPAATGLAKGDSKYIEKGSPLNSPLDRLPLVPAGSGGGSGGGGGIHHLEVKPAYHCSEHRHSFPALYYEEGADSLSQRVSFLKPLTRSKRDSTYSQLSPRHYYSGYSSSPEYSSESTHKIWERFRPYKKHHREEVYMAAGHALRKKVQFAKDEDLHDILDYWKGVSAQQKL</sequence>
<gene>
    <name type="primary">ELFN2</name>
    <name type="synonym">KIAA1904</name>
    <name type="synonym">LRRC62</name>
    <name type="synonym">PPP1R29</name>
</gene>
<proteinExistence type="evidence at protein level"/>
<reference key="1">
    <citation type="journal article" date="2001" name="DNA Res.">
        <title>Prediction of the coding sequences of unidentified human genes. XXI. The complete sequences of 60 new cDNA clones from brain which code for large proteins.</title>
        <authorList>
            <person name="Nagase T."/>
            <person name="Kikuno R."/>
            <person name="Ohara O."/>
        </authorList>
    </citation>
    <scope>NUCLEOTIDE SEQUENCE [LARGE SCALE MRNA]</scope>
    <source>
        <tissue>Brain</tissue>
    </source>
</reference>
<reference key="2">
    <citation type="journal article" date="1999" name="Nature">
        <title>The DNA sequence of human chromosome 22.</title>
        <authorList>
            <person name="Dunham I."/>
            <person name="Hunt A.R."/>
            <person name="Collins J.E."/>
            <person name="Bruskiewich R."/>
            <person name="Beare D.M."/>
            <person name="Clamp M."/>
            <person name="Smink L.J."/>
            <person name="Ainscough R."/>
            <person name="Almeida J.P."/>
            <person name="Babbage A.K."/>
            <person name="Bagguley C."/>
            <person name="Bailey J."/>
            <person name="Barlow K.F."/>
            <person name="Bates K.N."/>
            <person name="Beasley O.P."/>
            <person name="Bird C.P."/>
            <person name="Blakey S.E."/>
            <person name="Bridgeman A.M."/>
            <person name="Buck D."/>
            <person name="Burgess J."/>
            <person name="Burrill W.D."/>
            <person name="Burton J."/>
            <person name="Carder C."/>
            <person name="Carter N.P."/>
            <person name="Chen Y."/>
            <person name="Clark G."/>
            <person name="Clegg S.M."/>
            <person name="Cobley V.E."/>
            <person name="Cole C.G."/>
            <person name="Collier R.E."/>
            <person name="Connor R."/>
            <person name="Conroy D."/>
            <person name="Corby N.R."/>
            <person name="Coville G.J."/>
            <person name="Cox A.V."/>
            <person name="Davis J."/>
            <person name="Dawson E."/>
            <person name="Dhami P.D."/>
            <person name="Dockree C."/>
            <person name="Dodsworth S.J."/>
            <person name="Durbin R.M."/>
            <person name="Ellington A.G."/>
            <person name="Evans K.L."/>
            <person name="Fey J.M."/>
            <person name="Fleming K."/>
            <person name="French L."/>
            <person name="Garner A.A."/>
            <person name="Gilbert J.G.R."/>
            <person name="Goward M.E."/>
            <person name="Grafham D.V."/>
            <person name="Griffiths M.N.D."/>
            <person name="Hall C."/>
            <person name="Hall R.E."/>
            <person name="Hall-Tamlyn G."/>
            <person name="Heathcott R.W."/>
            <person name="Ho S."/>
            <person name="Holmes S."/>
            <person name="Hunt S.E."/>
            <person name="Jones M.C."/>
            <person name="Kershaw J."/>
            <person name="Kimberley A.M."/>
            <person name="King A."/>
            <person name="Laird G.K."/>
            <person name="Langford C.F."/>
            <person name="Leversha M.A."/>
            <person name="Lloyd C."/>
            <person name="Lloyd D.M."/>
            <person name="Martyn I.D."/>
            <person name="Mashreghi-Mohammadi M."/>
            <person name="Matthews L.H."/>
            <person name="Mccann O.T."/>
            <person name="Mcclay J."/>
            <person name="Mclaren S."/>
            <person name="McMurray A.A."/>
            <person name="Milne S.A."/>
            <person name="Mortimore B.J."/>
            <person name="Odell C.N."/>
            <person name="Pavitt R."/>
            <person name="Pearce A.V."/>
            <person name="Pearson D."/>
            <person name="Phillimore B.J.C.T."/>
            <person name="Phillips S.H."/>
            <person name="Plumb R.W."/>
            <person name="Ramsay H."/>
            <person name="Ramsey Y."/>
            <person name="Rogers L."/>
            <person name="Ross M.T."/>
            <person name="Scott C.E."/>
            <person name="Sehra H.K."/>
            <person name="Skuce C.D."/>
            <person name="Smalley S."/>
            <person name="Smith M.L."/>
            <person name="Soderlund C."/>
            <person name="Spragon L."/>
            <person name="Steward C.A."/>
            <person name="Sulston J.E."/>
            <person name="Swann R.M."/>
            <person name="Vaudin M."/>
            <person name="Wall M."/>
            <person name="Wallis J.M."/>
            <person name="Whiteley M.N."/>
            <person name="Willey D.L."/>
            <person name="Williams L."/>
            <person name="Williams S.A."/>
            <person name="Williamson H."/>
            <person name="Wilmer T.E."/>
            <person name="Wilming L."/>
            <person name="Wright C.L."/>
            <person name="Hubbard T."/>
            <person name="Bentley D.R."/>
            <person name="Beck S."/>
            <person name="Rogers J."/>
            <person name="Shimizu N."/>
            <person name="Minoshima S."/>
            <person name="Kawasaki K."/>
            <person name="Sasaki T."/>
            <person name="Asakawa S."/>
            <person name="Kudoh J."/>
            <person name="Shintani A."/>
            <person name="Shibuya K."/>
            <person name="Yoshizaki Y."/>
            <person name="Aoki N."/>
            <person name="Mitsuyama S."/>
            <person name="Roe B.A."/>
            <person name="Chen F."/>
            <person name="Chu L."/>
            <person name="Crabtree J."/>
            <person name="Deschamps S."/>
            <person name="Do A."/>
            <person name="Do T."/>
            <person name="Dorman A."/>
            <person name="Fang F."/>
            <person name="Fu Y."/>
            <person name="Hu P."/>
            <person name="Hua A."/>
            <person name="Kenton S."/>
            <person name="Lai H."/>
            <person name="Lao H.I."/>
            <person name="Lewis J."/>
            <person name="Lewis S."/>
            <person name="Lin S.-P."/>
            <person name="Loh P."/>
            <person name="Malaj E."/>
            <person name="Nguyen T."/>
            <person name="Pan H."/>
            <person name="Phan S."/>
            <person name="Qi S."/>
            <person name="Qian Y."/>
            <person name="Ray L."/>
            <person name="Ren Q."/>
            <person name="Shaull S."/>
            <person name="Sloan D."/>
            <person name="Song L."/>
            <person name="Wang Q."/>
            <person name="Wang Y."/>
            <person name="Wang Z."/>
            <person name="White J."/>
            <person name="Willingham D."/>
            <person name="Wu H."/>
            <person name="Yao Z."/>
            <person name="Zhan M."/>
            <person name="Zhang G."/>
            <person name="Chissoe S."/>
            <person name="Murray J."/>
            <person name="Miller N."/>
            <person name="Minx P."/>
            <person name="Fulton R."/>
            <person name="Johnson D."/>
            <person name="Bemis G."/>
            <person name="Bentley D."/>
            <person name="Bradshaw H."/>
            <person name="Bourne S."/>
            <person name="Cordes M."/>
            <person name="Du Z."/>
            <person name="Fulton L."/>
            <person name="Goela D."/>
            <person name="Graves T."/>
            <person name="Hawkins J."/>
            <person name="Hinds K."/>
            <person name="Kemp K."/>
            <person name="Latreille P."/>
            <person name="Layman D."/>
            <person name="Ozersky P."/>
            <person name="Rohlfing T."/>
            <person name="Scheet P."/>
            <person name="Walker C."/>
            <person name="Wamsley A."/>
            <person name="Wohldmann P."/>
            <person name="Pepin K."/>
            <person name="Nelson J."/>
            <person name="Korf I."/>
            <person name="Bedell J.A."/>
            <person name="Hillier L.W."/>
            <person name="Mardis E."/>
            <person name="Waterston R."/>
            <person name="Wilson R."/>
            <person name="Emanuel B.S."/>
            <person name="Shaikh T."/>
            <person name="Kurahashi H."/>
            <person name="Saitta S."/>
            <person name="Budarf M.L."/>
            <person name="McDermid H.E."/>
            <person name="Johnson A."/>
            <person name="Wong A.C.C."/>
            <person name="Morrow B.E."/>
            <person name="Edelmann L."/>
            <person name="Kim U.J."/>
            <person name="Shizuya H."/>
            <person name="Simon M.I."/>
            <person name="Dumanski J.P."/>
            <person name="Peyrard M."/>
            <person name="Kedra D."/>
            <person name="Seroussi E."/>
            <person name="Fransson I."/>
            <person name="Tapia I."/>
            <person name="Bruder C.E."/>
            <person name="O'Brien K.P."/>
            <person name="Wilkinson P."/>
            <person name="Bodenteich A."/>
            <person name="Hartman K."/>
            <person name="Hu X."/>
            <person name="Khan A.S."/>
            <person name="Lane L."/>
            <person name="Tilahun Y."/>
            <person name="Wright H."/>
        </authorList>
    </citation>
    <scope>NUCLEOTIDE SEQUENCE [LARGE SCALE GENOMIC DNA]</scope>
</reference>
<reference key="3">
    <citation type="journal article" date="2006" name="Cell">
        <title>Global, in vivo, and site-specific phosphorylation dynamics in signaling networks.</title>
        <authorList>
            <person name="Olsen J.V."/>
            <person name="Blagoev B."/>
            <person name="Gnad F."/>
            <person name="Macek B."/>
            <person name="Kumar C."/>
            <person name="Mortensen P."/>
            <person name="Mann M."/>
        </authorList>
    </citation>
    <scope>PHOSPHORYLATION [LARGE SCALE ANALYSIS] AT SER-619</scope>
    <scope>IDENTIFICATION BY MASS SPECTROMETRY [LARGE SCALE ANALYSIS]</scope>
    <source>
        <tissue>Cervix carcinoma</tissue>
    </source>
</reference>
<reference key="4">
    <citation type="journal article" date="2009" name="Chem. Biol.">
        <title>Docking motif-guided mapping of the interactome of protein phosphatase-1.</title>
        <authorList>
            <person name="Hendrickx A."/>
            <person name="Beullens M."/>
            <person name="Ceulemans H."/>
            <person name="Den Abt T."/>
            <person name="Van Eynde A."/>
            <person name="Nicolaescu E."/>
            <person name="Lesage B."/>
            <person name="Bollen M."/>
        </authorList>
    </citation>
    <scope>FUNCTION</scope>
    <scope>INTERACTION WITH PPP1CA</scope>
</reference>
<feature type="signal peptide" evidence="2">
    <location>
        <begin position="1"/>
        <end position="22"/>
    </location>
</feature>
<feature type="chain" id="PRO_0000256138" description="Protein phosphatase 1 regulatory subunit 29">
    <location>
        <begin position="23"/>
        <end position="820"/>
    </location>
</feature>
<feature type="topological domain" description="Extracellular" evidence="2">
    <location>
        <begin position="23"/>
        <end position="397"/>
    </location>
</feature>
<feature type="transmembrane region" description="Helical" evidence="2">
    <location>
        <begin position="398"/>
        <end position="418"/>
    </location>
</feature>
<feature type="topological domain" description="Cytoplasmic" evidence="2">
    <location>
        <begin position="419"/>
        <end position="820"/>
    </location>
</feature>
<feature type="repeat" description="LRR 1">
    <location>
        <begin position="56"/>
        <end position="77"/>
    </location>
</feature>
<feature type="repeat" description="LRR 2">
    <location>
        <begin position="80"/>
        <end position="101"/>
    </location>
</feature>
<feature type="repeat" description="LRR 3">
    <location>
        <begin position="104"/>
        <end position="125"/>
    </location>
</feature>
<feature type="repeat" description="LRR 4">
    <location>
        <begin position="128"/>
        <end position="149"/>
    </location>
</feature>
<feature type="repeat" description="LRR 5">
    <location>
        <begin position="152"/>
        <end position="173"/>
    </location>
</feature>
<feature type="domain" description="LRRCT">
    <location>
        <begin position="185"/>
        <end position="247"/>
    </location>
</feature>
<feature type="domain" description="Fibronectin type-III">
    <location>
        <begin position="292"/>
        <end position="379"/>
    </location>
</feature>
<feature type="region of interest" description="Disordered" evidence="3">
    <location>
        <begin position="250"/>
        <end position="294"/>
    </location>
</feature>
<feature type="region of interest" description="Disordered" evidence="3">
    <location>
        <begin position="508"/>
        <end position="527"/>
    </location>
</feature>
<feature type="region of interest" description="Disordered" evidence="3">
    <location>
        <begin position="589"/>
        <end position="612"/>
    </location>
</feature>
<feature type="region of interest" description="Disordered" evidence="3">
    <location>
        <begin position="654"/>
        <end position="677"/>
    </location>
</feature>
<feature type="modified residue" description="Phosphoserine" evidence="6">
    <location>
        <position position="619"/>
    </location>
</feature>
<feature type="modified residue" description="Phosphoserine" evidence="1">
    <location>
        <position position="668"/>
    </location>
</feature>
<feature type="modified residue" description="Phosphoserine" evidence="1">
    <location>
        <position position="672"/>
    </location>
</feature>
<feature type="glycosylation site" description="N-linked (GlcNAc...) asparagine" evidence="2">
    <location>
        <position position="54"/>
    </location>
</feature>
<feature type="glycosylation site" description="N-linked (GlcNAc...) asparagine" evidence="2">
    <location>
        <position position="80"/>
    </location>
</feature>
<feature type="glycosylation site" description="N-linked (GlcNAc...) asparagine" evidence="2">
    <location>
        <position position="85"/>
    </location>
</feature>
<feature type="glycosylation site" description="N-linked (GlcNAc...) asparagine" evidence="2">
    <location>
        <position position="117"/>
    </location>
</feature>
<feature type="glycosylation site" description="N-linked (GlcNAc...) asparagine" evidence="2">
    <location>
        <position position="205"/>
    </location>
</feature>
<feature type="glycosylation site" description="N-linked (GlcNAc...) asparagine" evidence="2">
    <location>
        <position position="247"/>
    </location>
</feature>
<feature type="sequence conflict" description="In Ref. 1; BAB67797." evidence="5" ref="1">
    <original>T</original>
    <variation>I</variation>
    <location>
        <position position="239"/>
    </location>
</feature>
<feature type="sequence conflict" description="In Ref. 1; BAB67797." evidence="5" ref="1">
    <original>P</original>
    <variation>S</variation>
    <location>
        <position position="605"/>
    </location>
</feature>
<name>PPR29_HUMAN</name>
<accession>Q5R3F8</accession>
<accession>Q96PY3</accession>
<keyword id="KW-0325">Glycoprotein</keyword>
<keyword id="KW-0433">Leucine-rich repeat</keyword>
<keyword id="KW-0472">Membrane</keyword>
<keyword id="KW-0597">Phosphoprotein</keyword>
<keyword id="KW-0650">Protein phosphatase inhibitor</keyword>
<keyword id="KW-1267">Proteomics identification</keyword>
<keyword id="KW-1185">Reference proteome</keyword>
<keyword id="KW-0677">Repeat</keyword>
<keyword id="KW-0732">Signal</keyword>
<keyword id="KW-0812">Transmembrane</keyword>
<keyword id="KW-1133">Transmembrane helix</keyword>